<feature type="signal peptide" evidence="3">
    <location>
        <begin position="1" status="less than"/>
        <end position="20"/>
    </location>
</feature>
<feature type="chain" id="PRO_0000000320" description="Acetylcholine receptor subunit beta">
    <location>
        <begin position="21"/>
        <end position="489"/>
    </location>
</feature>
<feature type="topological domain" description="Extracellular" evidence="3">
    <location>
        <begin position="21"/>
        <end position="235"/>
    </location>
</feature>
<feature type="transmembrane region" description="Helical" evidence="3">
    <location>
        <begin position="236"/>
        <end position="260"/>
    </location>
</feature>
<feature type="transmembrane region" description="Helical" evidence="3">
    <location>
        <begin position="268"/>
        <end position="286"/>
    </location>
</feature>
<feature type="transmembrane region" description="Helical" evidence="3">
    <location>
        <begin position="302"/>
        <end position="323"/>
    </location>
</feature>
<feature type="topological domain" description="Cytoplasmic" evidence="3">
    <location>
        <begin position="324"/>
        <end position="457"/>
    </location>
</feature>
<feature type="transmembrane region" description="Helical" evidence="3">
    <location>
        <begin position="458"/>
        <end position="476"/>
    </location>
</feature>
<feature type="glycosylation site" description="N-linked (GlcNAc...) asparagine" evidence="3">
    <location>
        <position position="135"/>
    </location>
</feature>
<feature type="glycosylation site" description="N-linked (GlcNAc...) asparagine" evidence="3">
    <location>
        <position position="161"/>
    </location>
</feature>
<feature type="disulfide bond" evidence="1">
    <location>
        <begin position="148"/>
        <end position="162"/>
    </location>
</feature>
<feature type="non-terminal residue">
    <location>
        <position position="1"/>
    </location>
</feature>
<organism>
    <name type="scientific">Xenopus laevis</name>
    <name type="common">African clawed frog</name>
    <dbReference type="NCBI Taxonomy" id="8355"/>
    <lineage>
        <taxon>Eukaryota</taxon>
        <taxon>Metazoa</taxon>
        <taxon>Chordata</taxon>
        <taxon>Craniata</taxon>
        <taxon>Vertebrata</taxon>
        <taxon>Euteleostomi</taxon>
        <taxon>Amphibia</taxon>
        <taxon>Batrachia</taxon>
        <taxon>Anura</taxon>
        <taxon>Pipoidea</taxon>
        <taxon>Pipidae</taxon>
        <taxon>Xenopodinae</taxon>
        <taxon>Xenopus</taxon>
        <taxon>Xenopus</taxon>
    </lineage>
</organism>
<dbReference type="EMBL" id="U04618">
    <property type="protein sequence ID" value="AAC59659.1"/>
    <property type="molecule type" value="mRNA"/>
</dbReference>
<dbReference type="SMR" id="P49579"/>
<dbReference type="GlyCosmos" id="P49579">
    <property type="glycosylation" value="2 sites, No reported glycans"/>
</dbReference>
<dbReference type="AGR" id="Xenbase:XB-GENE-6252044"/>
<dbReference type="Xenbase" id="XB-GENE-6252044">
    <property type="gene designation" value="chrnb1.L"/>
</dbReference>
<dbReference type="Proteomes" id="UP000186698">
    <property type="component" value="Unplaced"/>
</dbReference>
<dbReference type="GO" id="GO:0005892">
    <property type="term" value="C:acetylcholine-gated channel complex"/>
    <property type="evidence" value="ECO:0000318"/>
    <property type="project" value="GO_Central"/>
</dbReference>
<dbReference type="GO" id="GO:0043005">
    <property type="term" value="C:neuron projection"/>
    <property type="evidence" value="ECO:0000318"/>
    <property type="project" value="GO_Central"/>
</dbReference>
<dbReference type="GO" id="GO:0005886">
    <property type="term" value="C:plasma membrane"/>
    <property type="evidence" value="ECO:0000318"/>
    <property type="project" value="GO_Central"/>
</dbReference>
<dbReference type="GO" id="GO:0045211">
    <property type="term" value="C:postsynaptic membrane"/>
    <property type="evidence" value="ECO:0007669"/>
    <property type="project" value="UniProtKB-SubCell"/>
</dbReference>
<dbReference type="GO" id="GO:0045202">
    <property type="term" value="C:synapse"/>
    <property type="evidence" value="ECO:0000318"/>
    <property type="project" value="GO_Central"/>
</dbReference>
<dbReference type="GO" id="GO:0015464">
    <property type="term" value="F:acetylcholine receptor activity"/>
    <property type="evidence" value="ECO:0000318"/>
    <property type="project" value="GO_Central"/>
</dbReference>
<dbReference type="GO" id="GO:0022848">
    <property type="term" value="F:acetylcholine-gated monoatomic cation-selective channel activity"/>
    <property type="evidence" value="ECO:0000318"/>
    <property type="project" value="GO_Central"/>
</dbReference>
<dbReference type="GO" id="GO:0095500">
    <property type="term" value="P:acetylcholine receptor signaling pathway"/>
    <property type="evidence" value="ECO:0000318"/>
    <property type="project" value="GO_Central"/>
</dbReference>
<dbReference type="GO" id="GO:0007268">
    <property type="term" value="P:chemical synaptic transmission"/>
    <property type="evidence" value="ECO:0000318"/>
    <property type="project" value="GO_Central"/>
</dbReference>
<dbReference type="GO" id="GO:0051899">
    <property type="term" value="P:membrane depolarization"/>
    <property type="evidence" value="ECO:0000318"/>
    <property type="project" value="GO_Central"/>
</dbReference>
<dbReference type="GO" id="GO:0034220">
    <property type="term" value="P:monoatomic ion transmembrane transport"/>
    <property type="evidence" value="ECO:0000318"/>
    <property type="project" value="GO_Central"/>
</dbReference>
<dbReference type="CDD" id="cd19024">
    <property type="entry name" value="LGIC_ECD_nAChR_B1"/>
    <property type="match status" value="1"/>
</dbReference>
<dbReference type="CDD" id="cd19064">
    <property type="entry name" value="LGIC_TM_nAChR"/>
    <property type="match status" value="1"/>
</dbReference>
<dbReference type="FunFam" id="1.20.58.390:FF:000026">
    <property type="entry name" value="Cholinergic receptor nicotinic beta 1 subunit"/>
    <property type="match status" value="1"/>
</dbReference>
<dbReference type="FunFam" id="2.70.170.10:FF:000012">
    <property type="entry name" value="Nicotinic acetylcholine receptor subunit gamma"/>
    <property type="match status" value="1"/>
</dbReference>
<dbReference type="Gene3D" id="2.70.170.10">
    <property type="entry name" value="Neurotransmitter-gated ion-channel ligand-binding domain"/>
    <property type="match status" value="1"/>
</dbReference>
<dbReference type="Gene3D" id="1.20.58.390">
    <property type="entry name" value="Neurotransmitter-gated ion-channel transmembrane domain"/>
    <property type="match status" value="2"/>
</dbReference>
<dbReference type="InterPro" id="IPR006202">
    <property type="entry name" value="Neur_chan_lig-bd"/>
</dbReference>
<dbReference type="InterPro" id="IPR036734">
    <property type="entry name" value="Neur_chan_lig-bd_sf"/>
</dbReference>
<dbReference type="InterPro" id="IPR006201">
    <property type="entry name" value="Neur_channel"/>
</dbReference>
<dbReference type="InterPro" id="IPR036719">
    <property type="entry name" value="Neuro-gated_channel_TM_sf"/>
</dbReference>
<dbReference type="InterPro" id="IPR038050">
    <property type="entry name" value="Neuro_actylchol_rec"/>
</dbReference>
<dbReference type="InterPro" id="IPR006029">
    <property type="entry name" value="Neurotrans-gated_channel_TM"/>
</dbReference>
<dbReference type="InterPro" id="IPR018000">
    <property type="entry name" value="Neurotransmitter_ion_chnl_CS"/>
</dbReference>
<dbReference type="InterPro" id="IPR002394">
    <property type="entry name" value="Nicotinic_acetylcholine_rcpt"/>
</dbReference>
<dbReference type="NCBIfam" id="TIGR00860">
    <property type="entry name" value="LIC"/>
    <property type="match status" value="1"/>
</dbReference>
<dbReference type="PANTHER" id="PTHR18945">
    <property type="entry name" value="NEUROTRANSMITTER GATED ION CHANNEL"/>
    <property type="match status" value="1"/>
</dbReference>
<dbReference type="Pfam" id="PF02931">
    <property type="entry name" value="Neur_chan_LBD"/>
    <property type="match status" value="1"/>
</dbReference>
<dbReference type="Pfam" id="PF02932">
    <property type="entry name" value="Neur_chan_memb"/>
    <property type="match status" value="1"/>
</dbReference>
<dbReference type="PRINTS" id="PR00254">
    <property type="entry name" value="NICOTINICR"/>
</dbReference>
<dbReference type="PRINTS" id="PR00252">
    <property type="entry name" value="NRIONCHANNEL"/>
</dbReference>
<dbReference type="SUPFAM" id="SSF90112">
    <property type="entry name" value="Neurotransmitter-gated ion-channel transmembrane pore"/>
    <property type="match status" value="1"/>
</dbReference>
<dbReference type="SUPFAM" id="SSF63712">
    <property type="entry name" value="Nicotinic receptor ligand binding domain-like"/>
    <property type="match status" value="1"/>
</dbReference>
<dbReference type="PROSITE" id="PS00236">
    <property type="entry name" value="NEUROTR_ION_CHANNEL"/>
    <property type="match status" value="1"/>
</dbReference>
<accession>P49579</accession>
<gene>
    <name type="primary">chrnb1</name>
</gene>
<keyword id="KW-1003">Cell membrane</keyword>
<keyword id="KW-1015">Disulfide bond</keyword>
<keyword id="KW-0325">Glycoprotein</keyword>
<keyword id="KW-0407">Ion channel</keyword>
<keyword id="KW-0406">Ion transport</keyword>
<keyword id="KW-1071">Ligand-gated ion channel</keyword>
<keyword id="KW-0472">Membrane</keyword>
<keyword id="KW-0628">Postsynaptic cell membrane</keyword>
<keyword id="KW-0675">Receptor</keyword>
<keyword id="KW-1185">Reference proteome</keyword>
<keyword id="KW-0732">Signal</keyword>
<keyword id="KW-0770">Synapse</keyword>
<keyword id="KW-0812">Transmembrane</keyword>
<keyword id="KW-1133">Transmembrane helix</keyword>
<keyword id="KW-0813">Transport</keyword>
<comment type="function">
    <text>After binding acetylcholine, the AChR responds by an extensive change in conformation that affects all subunits and leads to opening of an ion-conducting channel across the plasma membrane.</text>
</comment>
<comment type="catalytic activity">
    <reaction evidence="2">
        <text>K(+)(in) = K(+)(out)</text>
        <dbReference type="Rhea" id="RHEA:29463"/>
        <dbReference type="ChEBI" id="CHEBI:29103"/>
    </reaction>
</comment>
<comment type="catalytic activity">
    <reaction evidence="2">
        <text>Na(+)(in) = Na(+)(out)</text>
        <dbReference type="Rhea" id="RHEA:34963"/>
        <dbReference type="ChEBI" id="CHEBI:29101"/>
    </reaction>
</comment>
<comment type="subunit">
    <text>Pentamer of two alpha chains, and one each of the beta, delta, and gamma (in immature muscle) or epsilon (in mature muscle) chains.</text>
</comment>
<comment type="subcellular location">
    <subcellularLocation>
        <location>Postsynaptic cell membrane</location>
        <topology>Multi-pass membrane protein</topology>
    </subcellularLocation>
    <subcellularLocation>
        <location>Cell membrane</location>
        <topology>Multi-pass membrane protein</topology>
    </subcellularLocation>
</comment>
<comment type="similarity">
    <text evidence="4">Belongs to the ligand-gated ion channel (TC 1.A.9) family. Acetylcholine receptor (TC 1.A.9.1) subfamily. Beta-1/CHRNB1 sub-subfamily.</text>
</comment>
<name>ACHB_XENLA</name>
<evidence type="ECO:0000250" key="1"/>
<evidence type="ECO:0000250" key="2">
    <source>
        <dbReference type="UniProtKB" id="P04758"/>
    </source>
</evidence>
<evidence type="ECO:0000255" key="3"/>
<evidence type="ECO:0000305" key="4"/>
<proteinExistence type="evidence at transcript level"/>
<sequence>NSGALLWPLIWGLLLIGTQALDKEAQLRDKVFENYNINVRPARTPDQRVVVQVGMTLAHVISVSEKDEELKTKVYLEMAWNDQRLSWDPKQYGGIESLRISSSQVWTPDIVLMNNNDGNFNFALQVDVLVSPNGNVTWHPPGLYVSSCSIEVQYYPFDWQNCSMVFRSYTYGADEVTLVHPKDANGKEVTQAVIFPNTFEENGQWVIRHRSSRKNSSPNDPLYEDITFYLVIQRKPLFYIVNVIVPCILITILAIFVFYLPPDAGEKMTLSIFALLTLTVFLLLLADKVPETSLGVPIIVNYLIFTMTLVTFSVIFSVVVLNLHHRSPNTHHMPQWVKQIFIHYLPKYLCIRRPKPETPLPVAPPPRQVTSTRHADEYFIRRPENDFFLPKQERYHADPFSRDMKWFLEGPSLGLVLPRDLQSAVTAIRYLAQQLQEQEDYDTLKEDWQYVAMVVDRLFLWTFIAFTSLGTLSIFLDANFNLPPDTPFP</sequence>
<reference key="1">
    <citation type="journal article" date="1994" name="Recept. Channels">
        <title>Structure and expression of the nicotinic acetylcholine receptor beta subunit of Xenopus laevis.</title>
        <authorList>
            <person name="Kullberg R.W."/>
            <person name="Zheng Y.C."/>
            <person name="Todt W."/>
            <person name="Owens J.L."/>
            <person name="Fraser S.E."/>
            <person name="Mandel G."/>
        </authorList>
    </citation>
    <scope>NUCLEOTIDE SEQUENCE [MRNA]</scope>
</reference>
<protein>
    <recommendedName>
        <fullName>Acetylcholine receptor subunit beta</fullName>
    </recommendedName>
</protein>